<evidence type="ECO:0000255" key="1">
    <source>
        <dbReference type="HAMAP-Rule" id="MF_00652"/>
    </source>
</evidence>
<feature type="chain" id="PRO_1000131133" description="UPF0246 protein PLES_14941">
    <location>
        <begin position="1"/>
        <end position="259"/>
    </location>
</feature>
<accession>B7UUV7</accession>
<reference key="1">
    <citation type="journal article" date="2009" name="Genome Res.">
        <title>Newly introduced genomic prophage islands are critical determinants of in vivo competitiveness in the Liverpool epidemic strain of Pseudomonas aeruginosa.</title>
        <authorList>
            <person name="Winstanley C."/>
            <person name="Langille M.G.I."/>
            <person name="Fothergill J.L."/>
            <person name="Kukavica-Ibrulj I."/>
            <person name="Paradis-Bleau C."/>
            <person name="Sanschagrin F."/>
            <person name="Thomson N.R."/>
            <person name="Winsor G.L."/>
            <person name="Quail M.A."/>
            <person name="Lennard N."/>
            <person name="Bignell A."/>
            <person name="Clarke L."/>
            <person name="Seeger K."/>
            <person name="Saunders D."/>
            <person name="Harris D."/>
            <person name="Parkhill J."/>
            <person name="Hancock R.E.W."/>
            <person name="Brinkman F.S.L."/>
            <person name="Levesque R.C."/>
        </authorList>
    </citation>
    <scope>NUCLEOTIDE SEQUENCE [LARGE SCALE GENOMIC DNA]</scope>
    <source>
        <strain>LESB58</strain>
    </source>
</reference>
<proteinExistence type="inferred from homology"/>
<organism>
    <name type="scientific">Pseudomonas aeruginosa (strain LESB58)</name>
    <dbReference type="NCBI Taxonomy" id="557722"/>
    <lineage>
        <taxon>Bacteria</taxon>
        <taxon>Pseudomonadati</taxon>
        <taxon>Pseudomonadota</taxon>
        <taxon>Gammaproteobacteria</taxon>
        <taxon>Pseudomonadales</taxon>
        <taxon>Pseudomonadaceae</taxon>
        <taxon>Pseudomonas</taxon>
    </lineage>
</organism>
<dbReference type="EMBL" id="FM209186">
    <property type="protein sequence ID" value="CAW26222.1"/>
    <property type="molecule type" value="Genomic_DNA"/>
</dbReference>
<dbReference type="SMR" id="B7UUV7"/>
<dbReference type="KEGG" id="pag:PLES_14941"/>
<dbReference type="HOGENOM" id="CLU_061989_0_0_6"/>
<dbReference type="GO" id="GO:0005829">
    <property type="term" value="C:cytosol"/>
    <property type="evidence" value="ECO:0007669"/>
    <property type="project" value="TreeGrafter"/>
</dbReference>
<dbReference type="GO" id="GO:0033194">
    <property type="term" value="P:response to hydroperoxide"/>
    <property type="evidence" value="ECO:0007669"/>
    <property type="project" value="TreeGrafter"/>
</dbReference>
<dbReference type="HAMAP" id="MF_00652">
    <property type="entry name" value="UPF0246"/>
    <property type="match status" value="1"/>
</dbReference>
<dbReference type="InterPro" id="IPR005583">
    <property type="entry name" value="YaaA"/>
</dbReference>
<dbReference type="NCBIfam" id="NF002541">
    <property type="entry name" value="PRK02101.1-1"/>
    <property type="match status" value="1"/>
</dbReference>
<dbReference type="NCBIfam" id="NF002542">
    <property type="entry name" value="PRK02101.1-3"/>
    <property type="match status" value="1"/>
</dbReference>
<dbReference type="PANTHER" id="PTHR30283:SF4">
    <property type="entry name" value="PEROXIDE STRESS RESISTANCE PROTEIN YAAA"/>
    <property type="match status" value="1"/>
</dbReference>
<dbReference type="PANTHER" id="PTHR30283">
    <property type="entry name" value="PEROXIDE STRESS RESPONSE PROTEIN YAAA"/>
    <property type="match status" value="1"/>
</dbReference>
<dbReference type="Pfam" id="PF03883">
    <property type="entry name" value="H2O2_YaaD"/>
    <property type="match status" value="1"/>
</dbReference>
<gene>
    <name type="ordered locus">PLES_14941</name>
</gene>
<name>Y1494_PSEA8</name>
<sequence length="259" mass="29561">MLMVISPAKTLDYETPPVTHRFTQPQYLDHAQELIQQLRQLTPLQISELMKLSDKLAGLNAARYASWHPEFTPENAKQALLAFKGDVYTGLNAEDFGEDDFAFAQDHLRMLSGLYGVLRPLDLMQPYRLEMGTRLANARGKDLYAFWGERISQWLNEALAAQGDDVLLNLASNEYFGAVKRKALQARVIDTEFKDLKNGQYKIISFYAKKARGMMARYVIRERLRDPAGLKDFNAHGYYFSAEQSGPDQLVFLRDAPQD</sequence>
<comment type="similarity">
    <text evidence="1">Belongs to the UPF0246 family.</text>
</comment>
<protein>
    <recommendedName>
        <fullName evidence="1">UPF0246 protein PLES_14941</fullName>
    </recommendedName>
</protein>